<proteinExistence type="inferred from homology"/>
<name>RL25_ECTM1</name>
<reference key="1">
    <citation type="submission" date="2007-04" db="EMBL/GenBank/DDBJ databases">
        <title>Complete sequence of Pseudomonas mendocina ymp.</title>
        <authorList>
            <consortium name="US DOE Joint Genome Institute"/>
            <person name="Copeland A."/>
            <person name="Lucas S."/>
            <person name="Lapidus A."/>
            <person name="Barry K."/>
            <person name="Glavina del Rio T."/>
            <person name="Dalin E."/>
            <person name="Tice H."/>
            <person name="Pitluck S."/>
            <person name="Kiss H."/>
            <person name="Brettin T."/>
            <person name="Detter J.C."/>
            <person name="Bruce D."/>
            <person name="Han C."/>
            <person name="Schmutz J."/>
            <person name="Larimer F."/>
            <person name="Land M."/>
            <person name="Hauser L."/>
            <person name="Kyrpides N."/>
            <person name="Mikhailova N."/>
            <person name="Hersman L."/>
            <person name="Dubois J."/>
            <person name="Maurice P."/>
            <person name="Richardson P."/>
        </authorList>
    </citation>
    <scope>NUCLEOTIDE SEQUENCE [LARGE SCALE GENOMIC DNA]</scope>
    <source>
        <strain>ymp</strain>
    </source>
</reference>
<dbReference type="EMBL" id="CP000680">
    <property type="protein sequence ID" value="ABP83821.1"/>
    <property type="molecule type" value="Genomic_DNA"/>
</dbReference>
<dbReference type="SMR" id="A4XR55"/>
<dbReference type="STRING" id="399739.Pmen_1054"/>
<dbReference type="KEGG" id="pmy:Pmen_1054"/>
<dbReference type="PATRIC" id="fig|399739.8.peg.1063"/>
<dbReference type="eggNOG" id="COG1825">
    <property type="taxonomic scope" value="Bacteria"/>
</dbReference>
<dbReference type="HOGENOM" id="CLU_075939_0_1_6"/>
<dbReference type="OrthoDB" id="9806411at2"/>
<dbReference type="GO" id="GO:0022625">
    <property type="term" value="C:cytosolic large ribosomal subunit"/>
    <property type="evidence" value="ECO:0007669"/>
    <property type="project" value="TreeGrafter"/>
</dbReference>
<dbReference type="GO" id="GO:0008097">
    <property type="term" value="F:5S rRNA binding"/>
    <property type="evidence" value="ECO:0007669"/>
    <property type="project" value="InterPro"/>
</dbReference>
<dbReference type="GO" id="GO:0003735">
    <property type="term" value="F:structural constituent of ribosome"/>
    <property type="evidence" value="ECO:0007669"/>
    <property type="project" value="InterPro"/>
</dbReference>
<dbReference type="GO" id="GO:0006412">
    <property type="term" value="P:translation"/>
    <property type="evidence" value="ECO:0007669"/>
    <property type="project" value="UniProtKB-UniRule"/>
</dbReference>
<dbReference type="CDD" id="cd00495">
    <property type="entry name" value="Ribosomal_L25_TL5_CTC"/>
    <property type="match status" value="1"/>
</dbReference>
<dbReference type="Gene3D" id="2.170.120.20">
    <property type="entry name" value="Ribosomal protein L25, beta domain"/>
    <property type="match status" value="1"/>
</dbReference>
<dbReference type="Gene3D" id="2.40.240.10">
    <property type="entry name" value="Ribosomal Protein L25, Chain P"/>
    <property type="match status" value="1"/>
</dbReference>
<dbReference type="HAMAP" id="MF_01334">
    <property type="entry name" value="Ribosomal_bL25_CTC"/>
    <property type="match status" value="1"/>
</dbReference>
<dbReference type="InterPro" id="IPR020056">
    <property type="entry name" value="Rbsml_bL25/Gln-tRNA_synth_N"/>
</dbReference>
<dbReference type="InterPro" id="IPR011035">
    <property type="entry name" value="Ribosomal_bL25/Gln-tRNA_synth"/>
</dbReference>
<dbReference type="InterPro" id="IPR020057">
    <property type="entry name" value="Ribosomal_bL25_b-dom"/>
</dbReference>
<dbReference type="InterPro" id="IPR037121">
    <property type="entry name" value="Ribosomal_bL25_C"/>
</dbReference>
<dbReference type="InterPro" id="IPR001021">
    <property type="entry name" value="Ribosomal_bL25_long"/>
</dbReference>
<dbReference type="InterPro" id="IPR029751">
    <property type="entry name" value="Ribosomal_L25_dom"/>
</dbReference>
<dbReference type="InterPro" id="IPR020930">
    <property type="entry name" value="Ribosomal_uL5_bac-type"/>
</dbReference>
<dbReference type="NCBIfam" id="TIGR00731">
    <property type="entry name" value="bL25_bact_ctc"/>
    <property type="match status" value="1"/>
</dbReference>
<dbReference type="NCBIfam" id="NF004128">
    <property type="entry name" value="PRK05618.1-2"/>
    <property type="match status" value="1"/>
</dbReference>
<dbReference type="NCBIfam" id="NF004130">
    <property type="entry name" value="PRK05618.1-5"/>
    <property type="match status" value="1"/>
</dbReference>
<dbReference type="NCBIfam" id="NF004612">
    <property type="entry name" value="PRK05943.1"/>
    <property type="match status" value="1"/>
</dbReference>
<dbReference type="PANTHER" id="PTHR33284">
    <property type="entry name" value="RIBOSOMAL PROTEIN L25/GLN-TRNA SYNTHETASE, ANTI-CODON-BINDING DOMAIN-CONTAINING PROTEIN"/>
    <property type="match status" value="1"/>
</dbReference>
<dbReference type="PANTHER" id="PTHR33284:SF1">
    <property type="entry name" value="RIBOSOMAL PROTEIN L25_GLN-TRNA SYNTHETASE, ANTI-CODON-BINDING DOMAIN-CONTAINING PROTEIN"/>
    <property type="match status" value="1"/>
</dbReference>
<dbReference type="Pfam" id="PF01386">
    <property type="entry name" value="Ribosomal_L25p"/>
    <property type="match status" value="1"/>
</dbReference>
<dbReference type="Pfam" id="PF14693">
    <property type="entry name" value="Ribosomal_TL5_C"/>
    <property type="match status" value="1"/>
</dbReference>
<dbReference type="SUPFAM" id="SSF50715">
    <property type="entry name" value="Ribosomal protein L25-like"/>
    <property type="match status" value="1"/>
</dbReference>
<accession>A4XR55</accession>
<keyword id="KW-0687">Ribonucleoprotein</keyword>
<keyword id="KW-0689">Ribosomal protein</keyword>
<keyword id="KW-0694">RNA-binding</keyword>
<keyword id="KW-0699">rRNA-binding</keyword>
<feature type="chain" id="PRO_1000052920" description="Large ribosomal subunit protein bL25">
    <location>
        <begin position="1"/>
        <end position="201"/>
    </location>
</feature>
<protein>
    <recommendedName>
        <fullName evidence="1">Large ribosomal subunit protein bL25</fullName>
    </recommendedName>
    <alternativeName>
        <fullName evidence="2">50S ribosomal protein L25</fullName>
    </alternativeName>
    <alternativeName>
        <fullName evidence="1">General stress protein CTC</fullName>
    </alternativeName>
</protein>
<comment type="function">
    <text evidence="1">This is one of the proteins that binds to the 5S RNA in the ribosome where it forms part of the central protuberance.</text>
</comment>
<comment type="subunit">
    <text evidence="1">Part of the 50S ribosomal subunit; part of the 5S rRNA/L5/L18/L25 subcomplex. Contacts the 5S rRNA. Binds to the 5S rRNA independently of L5 and L18.</text>
</comment>
<comment type="similarity">
    <text evidence="1">Belongs to the bacterial ribosomal protein bL25 family. CTC subfamily.</text>
</comment>
<evidence type="ECO:0000255" key="1">
    <source>
        <dbReference type="HAMAP-Rule" id="MF_01334"/>
    </source>
</evidence>
<evidence type="ECO:0000305" key="2"/>
<gene>
    <name evidence="1" type="primary">rplY</name>
    <name evidence="1" type="synonym">ctc</name>
    <name type="ordered locus">Pmen_1054</name>
</gene>
<organism>
    <name type="scientific">Ectopseudomonas mendocina (strain ymp)</name>
    <name type="common">Pseudomonas mendocina</name>
    <dbReference type="NCBI Taxonomy" id="399739"/>
    <lineage>
        <taxon>Bacteria</taxon>
        <taxon>Pseudomonadati</taxon>
        <taxon>Pseudomonadota</taxon>
        <taxon>Gammaproteobacteria</taxon>
        <taxon>Pseudomonadales</taxon>
        <taxon>Pseudomonadaceae</taxon>
        <taxon>Ectopseudomonas</taxon>
    </lineage>
</organism>
<sequence length="201" mass="21406">MTDFALNAEVRSDLGKGASRRLRRNVSMVPAVIYGGDKAPQSISLLAKDLAKLLENEAAFSHVLAVNVAGATENVVIKALQRHPAKGFVLHADFQRVVAGQKLTAHVPLHFINEATAVGVKQQGGEISHTINEVEVSCLPKDLPEFIEVDMAAVEVGQTVHMSDLKLPKGVELVALAHGNDLAVSNIHASRVKAEDEGAAE</sequence>